<feature type="chain" id="PRO_0000276988" description="Small ribosomal subunit protein uS3c">
    <location>
        <begin position="1"/>
        <end position="218"/>
    </location>
</feature>
<feature type="domain" description="KH type-2">
    <location>
        <begin position="43"/>
        <end position="118"/>
    </location>
</feature>
<keyword id="KW-0150">Chloroplast</keyword>
<keyword id="KW-0934">Plastid</keyword>
<keyword id="KW-1185">Reference proteome</keyword>
<keyword id="KW-0687">Ribonucleoprotein</keyword>
<keyword id="KW-0689">Ribosomal protein</keyword>
<keyword id="KW-0694">RNA-binding</keyword>
<keyword id="KW-0699">rRNA-binding</keyword>
<organism>
    <name type="scientific">Coffea arabica</name>
    <name type="common">Arabian coffee</name>
    <dbReference type="NCBI Taxonomy" id="13443"/>
    <lineage>
        <taxon>Eukaryota</taxon>
        <taxon>Viridiplantae</taxon>
        <taxon>Streptophyta</taxon>
        <taxon>Embryophyta</taxon>
        <taxon>Tracheophyta</taxon>
        <taxon>Spermatophyta</taxon>
        <taxon>Magnoliopsida</taxon>
        <taxon>eudicotyledons</taxon>
        <taxon>Gunneridae</taxon>
        <taxon>Pentapetalae</taxon>
        <taxon>asterids</taxon>
        <taxon>lamiids</taxon>
        <taxon>Gentianales</taxon>
        <taxon>Rubiaceae</taxon>
        <taxon>Ixoroideae</taxon>
        <taxon>Gardenieae complex</taxon>
        <taxon>Bertiereae - Coffeeae clade</taxon>
        <taxon>Coffeeae</taxon>
        <taxon>Coffea</taxon>
    </lineage>
</organism>
<sequence length="218" mass="24986">MGQKINPLGFRLGTTQGHHSLWFTQAKNYSEGLQEDQQIRNCIKNYVQKNTKISSGVEGIARIEIQKRIDLIQVIIFMGFPKPLLENQPRGIEELQTNLQKKCNSVNRKFNIAITKIAKPYGNPNILAEYIAGQLKNRVSFRKAMKKAIELTEQANTKGIQVQIAGRIDGKEIARVEWIRRGRVPLQTIRAKIDYCSYTVRTIYGVLGIKIWIFIDEE</sequence>
<evidence type="ECO:0000250" key="1"/>
<evidence type="ECO:0000305" key="2"/>
<comment type="subunit">
    <text evidence="1">Part of the 30S ribosomal subunit.</text>
</comment>
<comment type="subcellular location">
    <subcellularLocation>
        <location>Plastid</location>
        <location>Chloroplast</location>
    </subcellularLocation>
</comment>
<comment type="similarity">
    <text evidence="2">Belongs to the universal ribosomal protein uS3 family.</text>
</comment>
<accession>A0A374</accession>
<dbReference type="EMBL" id="EF044213">
    <property type="protein sequence ID" value="ABJ89717.1"/>
    <property type="molecule type" value="Genomic_DNA"/>
</dbReference>
<dbReference type="RefSeq" id="YP_817521.1">
    <property type="nucleotide sequence ID" value="NC_008535.1"/>
</dbReference>
<dbReference type="SMR" id="A0A374"/>
<dbReference type="GeneID" id="4421818"/>
<dbReference type="OrthoDB" id="1842609at2759"/>
<dbReference type="Proteomes" id="UP000515148">
    <property type="component" value="Chloroplast Pltd"/>
</dbReference>
<dbReference type="GO" id="GO:0009507">
    <property type="term" value="C:chloroplast"/>
    <property type="evidence" value="ECO:0007669"/>
    <property type="project" value="UniProtKB-SubCell"/>
</dbReference>
<dbReference type="GO" id="GO:0022627">
    <property type="term" value="C:cytosolic small ribosomal subunit"/>
    <property type="evidence" value="ECO:0007669"/>
    <property type="project" value="TreeGrafter"/>
</dbReference>
<dbReference type="GO" id="GO:0019843">
    <property type="term" value="F:rRNA binding"/>
    <property type="evidence" value="ECO:0007669"/>
    <property type="project" value="UniProtKB-KW"/>
</dbReference>
<dbReference type="GO" id="GO:0003735">
    <property type="term" value="F:structural constituent of ribosome"/>
    <property type="evidence" value="ECO:0007669"/>
    <property type="project" value="InterPro"/>
</dbReference>
<dbReference type="GO" id="GO:0006412">
    <property type="term" value="P:translation"/>
    <property type="evidence" value="ECO:0007669"/>
    <property type="project" value="UniProtKB-UniRule"/>
</dbReference>
<dbReference type="CDD" id="cd02412">
    <property type="entry name" value="KH-II_30S_S3"/>
    <property type="match status" value="1"/>
</dbReference>
<dbReference type="FunFam" id="3.30.1140.32:FF:000003">
    <property type="entry name" value="30S ribosomal protein S3, chloroplastic"/>
    <property type="match status" value="1"/>
</dbReference>
<dbReference type="FunFam" id="3.30.300.20:FF:000008">
    <property type="entry name" value="30S ribosomal protein S3, chloroplastic"/>
    <property type="match status" value="1"/>
</dbReference>
<dbReference type="Gene3D" id="3.30.300.20">
    <property type="match status" value="1"/>
</dbReference>
<dbReference type="Gene3D" id="3.30.1140.32">
    <property type="entry name" value="Ribosomal protein S3, C-terminal domain"/>
    <property type="match status" value="1"/>
</dbReference>
<dbReference type="HAMAP" id="MF_01309_B">
    <property type="entry name" value="Ribosomal_uS3_B"/>
    <property type="match status" value="1"/>
</dbReference>
<dbReference type="InterPro" id="IPR015946">
    <property type="entry name" value="KH_dom-like_a/b"/>
</dbReference>
<dbReference type="InterPro" id="IPR009019">
    <property type="entry name" value="KH_sf_prok-type"/>
</dbReference>
<dbReference type="InterPro" id="IPR036419">
    <property type="entry name" value="Ribosomal_S3_C_sf"/>
</dbReference>
<dbReference type="InterPro" id="IPR005704">
    <property type="entry name" value="Ribosomal_uS3_bac-typ"/>
</dbReference>
<dbReference type="InterPro" id="IPR001351">
    <property type="entry name" value="Ribosomal_uS3_C"/>
</dbReference>
<dbReference type="InterPro" id="IPR018280">
    <property type="entry name" value="Ribosomal_uS3_CS"/>
</dbReference>
<dbReference type="NCBIfam" id="TIGR01009">
    <property type="entry name" value="rpsC_bact"/>
    <property type="match status" value="1"/>
</dbReference>
<dbReference type="PANTHER" id="PTHR11760">
    <property type="entry name" value="30S/40S RIBOSOMAL PROTEIN S3"/>
    <property type="match status" value="1"/>
</dbReference>
<dbReference type="PANTHER" id="PTHR11760:SF19">
    <property type="entry name" value="SMALL RIBOSOMAL SUBUNIT PROTEIN US3C"/>
    <property type="match status" value="1"/>
</dbReference>
<dbReference type="Pfam" id="PF00189">
    <property type="entry name" value="Ribosomal_S3_C"/>
    <property type="match status" value="1"/>
</dbReference>
<dbReference type="SUPFAM" id="SSF54814">
    <property type="entry name" value="Prokaryotic type KH domain (KH-domain type II)"/>
    <property type="match status" value="1"/>
</dbReference>
<dbReference type="SUPFAM" id="SSF54821">
    <property type="entry name" value="Ribosomal protein S3 C-terminal domain"/>
    <property type="match status" value="1"/>
</dbReference>
<dbReference type="PROSITE" id="PS00548">
    <property type="entry name" value="RIBOSOMAL_S3"/>
    <property type="match status" value="1"/>
</dbReference>
<reference key="1">
    <citation type="journal article" date="2007" name="Plant Biotechnol. J.">
        <title>The complete nucleotide sequence of the coffee (Coffea arabica L.) chloroplast genome: organization and implications for biotechnology and phylogenetic relationships amongst angiosperms.</title>
        <authorList>
            <person name="Samson N."/>
            <person name="Bausher M.G."/>
            <person name="Lee S.-B."/>
            <person name="Jansen R.K."/>
            <person name="Daniell H."/>
        </authorList>
    </citation>
    <scope>NUCLEOTIDE SEQUENCE [LARGE SCALE GENOMIC DNA]</scope>
</reference>
<protein>
    <recommendedName>
        <fullName evidence="2">Small ribosomal subunit protein uS3c</fullName>
    </recommendedName>
    <alternativeName>
        <fullName>30S ribosomal protein S3, chloroplastic</fullName>
    </alternativeName>
</protein>
<gene>
    <name type="primary">rps3</name>
</gene>
<name>RR3_COFAR</name>
<geneLocation type="chloroplast"/>
<proteinExistence type="inferred from homology"/>